<sequence>MSSAVDATGNPIPTSAVLTASAKHIGMRCMPENVAFLKCKKNDPNPEKCLDKGRDVTRCVLGLLKDLHQKCQKEMDDYVGCMYYYTNEFDLCRKEQEAFEKVCPLK</sequence>
<name>NDA8B_ARATH</name>
<accession>Q8LGE7</accession>
<dbReference type="EMBL" id="AC068655">
    <property type="status" value="NOT_ANNOTATED_CDS"/>
    <property type="molecule type" value="Genomic_DNA"/>
</dbReference>
<dbReference type="EMBL" id="CP002688">
    <property type="protein sequence ID" value="AED92613.1"/>
    <property type="molecule type" value="Genomic_DNA"/>
</dbReference>
<dbReference type="EMBL" id="CP002688">
    <property type="protein sequence ID" value="AED92614.1"/>
    <property type="molecule type" value="Genomic_DNA"/>
</dbReference>
<dbReference type="EMBL" id="BT004782">
    <property type="protein sequence ID" value="AAO44048.1"/>
    <property type="molecule type" value="mRNA"/>
</dbReference>
<dbReference type="EMBL" id="AK227889">
    <property type="protein sequence ID" value="BAE99861.1"/>
    <property type="molecule type" value="mRNA"/>
</dbReference>
<dbReference type="EMBL" id="AY084313">
    <property type="protein sequence ID" value="AAM60901.1"/>
    <property type="molecule type" value="mRNA"/>
</dbReference>
<dbReference type="RefSeq" id="NP_197381.1">
    <property type="nucleotide sequence ID" value="NM_121885.4"/>
</dbReference>
<dbReference type="RefSeq" id="NP_850849.1">
    <property type="nucleotide sequence ID" value="NM_180518.4"/>
</dbReference>
<dbReference type="PDB" id="7A23">
    <property type="method" value="EM"/>
    <property type="resolution" value="3.70 A"/>
    <property type="chains" value="Y=1-106"/>
</dbReference>
<dbReference type="PDB" id="7A24">
    <property type="method" value="EM"/>
    <property type="resolution" value="3.80 A"/>
    <property type="chains" value="Y=1-106"/>
</dbReference>
<dbReference type="PDB" id="7AQQ">
    <property type="method" value="EM"/>
    <property type="resolution" value="3.06 A"/>
    <property type="chains" value="X=1-106"/>
</dbReference>
<dbReference type="PDB" id="7AR7">
    <property type="method" value="EM"/>
    <property type="resolution" value="3.72 A"/>
    <property type="chains" value="X=10-105"/>
</dbReference>
<dbReference type="PDB" id="7AR8">
    <property type="method" value="EM"/>
    <property type="resolution" value="3.53 A"/>
    <property type="chains" value="X=1-106"/>
</dbReference>
<dbReference type="PDB" id="7ARB">
    <property type="method" value="EM"/>
    <property type="resolution" value="3.41 A"/>
    <property type="chains" value="X=1-106"/>
</dbReference>
<dbReference type="PDB" id="8BEF">
    <property type="method" value="EM"/>
    <property type="resolution" value="2.13 A"/>
    <property type="chains" value="X=1-106"/>
</dbReference>
<dbReference type="PDB" id="8BPX">
    <property type="method" value="EM"/>
    <property type="resolution" value="2.09 A"/>
    <property type="chains" value="X=1-106"/>
</dbReference>
<dbReference type="PDB" id="8BQ5">
    <property type="method" value="EM"/>
    <property type="resolution" value="2.73 A"/>
    <property type="chains" value="X=1-106"/>
</dbReference>
<dbReference type="PDB" id="8BQ6">
    <property type="method" value="EM"/>
    <property type="resolution" value="2.80 A"/>
    <property type="chains" value="X=1-106"/>
</dbReference>
<dbReference type="PDBsum" id="7A23"/>
<dbReference type="PDBsum" id="7A24"/>
<dbReference type="PDBsum" id="7AQQ"/>
<dbReference type="PDBsum" id="7AR7"/>
<dbReference type="PDBsum" id="7AR8"/>
<dbReference type="PDBsum" id="7ARB"/>
<dbReference type="PDBsum" id="8BEF"/>
<dbReference type="PDBsum" id="8BPX"/>
<dbReference type="PDBsum" id="8BQ5"/>
<dbReference type="PDBsum" id="8BQ6"/>
<dbReference type="EMDB" id="EMD-11872"/>
<dbReference type="EMDB" id="EMD-11875"/>
<dbReference type="EMDB" id="EMD-11876"/>
<dbReference type="EMDB" id="EMD-11878"/>
<dbReference type="EMDB" id="EMD-16000"/>
<dbReference type="EMDB" id="EMD-16168"/>
<dbReference type="EMDB" id="EMD-16171"/>
<dbReference type="EMDB" id="EMD-16172"/>
<dbReference type="SMR" id="Q8LGE7"/>
<dbReference type="BioGRID" id="17274">
    <property type="interactions" value="2"/>
</dbReference>
<dbReference type="FunCoup" id="Q8LGE7">
    <property type="interactions" value="2443"/>
</dbReference>
<dbReference type="IntAct" id="Q8LGE7">
    <property type="interactions" value="2"/>
</dbReference>
<dbReference type="STRING" id="3702.Q8LGE7"/>
<dbReference type="TCDB" id="3.D.1.6.3">
    <property type="family name" value="the h+ or na+-translocating nadh dehydrogenase (ndh) family"/>
</dbReference>
<dbReference type="iPTMnet" id="Q8LGE7"/>
<dbReference type="PaxDb" id="3702-AT5G18800.1"/>
<dbReference type="ProteomicsDB" id="251143"/>
<dbReference type="EnsemblPlants" id="AT5G18800.1">
    <property type="protein sequence ID" value="AT5G18800.1"/>
    <property type="gene ID" value="AT5G18800"/>
</dbReference>
<dbReference type="EnsemblPlants" id="AT5G18800.2">
    <property type="protein sequence ID" value="AT5G18800.2"/>
    <property type="gene ID" value="AT5G18800"/>
</dbReference>
<dbReference type="GeneID" id="831998"/>
<dbReference type="Gramene" id="AT5G18800.1">
    <property type="protein sequence ID" value="AT5G18800.1"/>
    <property type="gene ID" value="AT5G18800"/>
</dbReference>
<dbReference type="Gramene" id="AT5G18800.2">
    <property type="protein sequence ID" value="AT5G18800.2"/>
    <property type="gene ID" value="AT5G18800"/>
</dbReference>
<dbReference type="KEGG" id="ath:AT5G18800"/>
<dbReference type="Araport" id="AT5G18800"/>
<dbReference type="TAIR" id="AT5G18800"/>
<dbReference type="eggNOG" id="KOG3458">
    <property type="taxonomic scope" value="Eukaryota"/>
</dbReference>
<dbReference type="HOGENOM" id="CLU_156825_0_0_1"/>
<dbReference type="InParanoid" id="Q8LGE7"/>
<dbReference type="OMA" id="REVETNC"/>
<dbReference type="OrthoDB" id="276296at2759"/>
<dbReference type="PhylomeDB" id="Q8LGE7"/>
<dbReference type="PRO" id="PR:Q8LGE7"/>
<dbReference type="Proteomes" id="UP000006548">
    <property type="component" value="Chromosome 5"/>
</dbReference>
<dbReference type="ExpressionAtlas" id="Q8LGE7">
    <property type="expression patterns" value="baseline and differential"/>
</dbReference>
<dbReference type="GO" id="GO:0005758">
    <property type="term" value="C:mitochondrial intermembrane space"/>
    <property type="evidence" value="ECO:0007669"/>
    <property type="project" value="UniProtKB-SubCell"/>
</dbReference>
<dbReference type="GO" id="GO:0005739">
    <property type="term" value="C:mitochondrion"/>
    <property type="evidence" value="ECO:0007005"/>
    <property type="project" value="TAIR"/>
</dbReference>
<dbReference type="GO" id="GO:0009536">
    <property type="term" value="C:plastid"/>
    <property type="evidence" value="ECO:0007005"/>
    <property type="project" value="TAIR"/>
</dbReference>
<dbReference type="GO" id="GO:0006120">
    <property type="term" value="P:mitochondrial electron transport, NADH to ubiquinone"/>
    <property type="evidence" value="ECO:0007669"/>
    <property type="project" value="InterPro"/>
</dbReference>
<dbReference type="InterPro" id="IPR010625">
    <property type="entry name" value="CHCH"/>
</dbReference>
<dbReference type="InterPro" id="IPR016680">
    <property type="entry name" value="NDUFA8"/>
</dbReference>
<dbReference type="PANTHER" id="PTHR13344:SF0">
    <property type="entry name" value="NADH DEHYDROGENASE [UBIQUINONE] 1 ALPHA SUBCOMPLEX SUBUNIT 8"/>
    <property type="match status" value="1"/>
</dbReference>
<dbReference type="PANTHER" id="PTHR13344">
    <property type="entry name" value="NADH-UBIQUINONE OXIDOREDUCTASE"/>
    <property type="match status" value="1"/>
</dbReference>
<dbReference type="Pfam" id="PF06747">
    <property type="entry name" value="CHCH"/>
    <property type="match status" value="1"/>
</dbReference>
<dbReference type="PROSITE" id="PS51808">
    <property type="entry name" value="CHCH"/>
    <property type="match status" value="2"/>
</dbReference>
<keyword id="KW-0002">3D-structure</keyword>
<keyword id="KW-0007">Acetylation</keyword>
<keyword id="KW-1015">Disulfide bond</keyword>
<keyword id="KW-0249">Electron transport</keyword>
<keyword id="KW-0496">Mitochondrion</keyword>
<keyword id="KW-1185">Reference proteome</keyword>
<keyword id="KW-0677">Repeat</keyword>
<keyword id="KW-0679">Respiratory chain</keyword>
<keyword id="KW-0813">Transport</keyword>
<protein>
    <recommendedName>
        <fullName>NADH dehydrogenase [ubiquinone] 1 alpha subcomplex subunit 8-B</fullName>
    </recommendedName>
</protein>
<reference key="1">
    <citation type="journal article" date="2000" name="Nature">
        <title>Sequence and analysis of chromosome 5 of the plant Arabidopsis thaliana.</title>
        <authorList>
            <person name="Tabata S."/>
            <person name="Kaneko T."/>
            <person name="Nakamura Y."/>
            <person name="Kotani H."/>
            <person name="Kato T."/>
            <person name="Asamizu E."/>
            <person name="Miyajima N."/>
            <person name="Sasamoto S."/>
            <person name="Kimura T."/>
            <person name="Hosouchi T."/>
            <person name="Kawashima K."/>
            <person name="Kohara M."/>
            <person name="Matsumoto M."/>
            <person name="Matsuno A."/>
            <person name="Muraki A."/>
            <person name="Nakayama S."/>
            <person name="Nakazaki N."/>
            <person name="Naruo K."/>
            <person name="Okumura S."/>
            <person name="Shinpo S."/>
            <person name="Takeuchi C."/>
            <person name="Wada T."/>
            <person name="Watanabe A."/>
            <person name="Yamada M."/>
            <person name="Yasuda M."/>
            <person name="Sato S."/>
            <person name="de la Bastide M."/>
            <person name="Huang E."/>
            <person name="Spiegel L."/>
            <person name="Gnoj L."/>
            <person name="O'Shaughnessy A."/>
            <person name="Preston R."/>
            <person name="Habermann K."/>
            <person name="Murray J."/>
            <person name="Johnson D."/>
            <person name="Rohlfing T."/>
            <person name="Nelson J."/>
            <person name="Stoneking T."/>
            <person name="Pepin K."/>
            <person name="Spieth J."/>
            <person name="Sekhon M."/>
            <person name="Armstrong J."/>
            <person name="Becker M."/>
            <person name="Belter E."/>
            <person name="Cordum H."/>
            <person name="Cordes M."/>
            <person name="Courtney L."/>
            <person name="Courtney W."/>
            <person name="Dante M."/>
            <person name="Du H."/>
            <person name="Edwards J."/>
            <person name="Fryman J."/>
            <person name="Haakensen B."/>
            <person name="Lamar E."/>
            <person name="Latreille P."/>
            <person name="Leonard S."/>
            <person name="Meyer R."/>
            <person name="Mulvaney E."/>
            <person name="Ozersky P."/>
            <person name="Riley A."/>
            <person name="Strowmatt C."/>
            <person name="Wagner-McPherson C."/>
            <person name="Wollam A."/>
            <person name="Yoakum M."/>
            <person name="Bell M."/>
            <person name="Dedhia N."/>
            <person name="Parnell L."/>
            <person name="Shah R."/>
            <person name="Rodriguez M."/>
            <person name="Hoon See L."/>
            <person name="Vil D."/>
            <person name="Baker J."/>
            <person name="Kirchoff K."/>
            <person name="Toth K."/>
            <person name="King L."/>
            <person name="Bahret A."/>
            <person name="Miller B."/>
            <person name="Marra M.A."/>
            <person name="Martienssen R."/>
            <person name="McCombie W.R."/>
            <person name="Wilson R.K."/>
            <person name="Murphy G."/>
            <person name="Bancroft I."/>
            <person name="Volckaert G."/>
            <person name="Wambutt R."/>
            <person name="Duesterhoeft A."/>
            <person name="Stiekema W."/>
            <person name="Pohl T."/>
            <person name="Entian K.-D."/>
            <person name="Terryn N."/>
            <person name="Hartley N."/>
            <person name="Bent E."/>
            <person name="Johnson S."/>
            <person name="Langham S.-A."/>
            <person name="McCullagh B."/>
            <person name="Robben J."/>
            <person name="Grymonprez B."/>
            <person name="Zimmermann W."/>
            <person name="Ramsperger U."/>
            <person name="Wedler H."/>
            <person name="Balke K."/>
            <person name="Wedler E."/>
            <person name="Peters S."/>
            <person name="van Staveren M."/>
            <person name="Dirkse W."/>
            <person name="Mooijman P."/>
            <person name="Klein Lankhorst R."/>
            <person name="Weitzenegger T."/>
            <person name="Bothe G."/>
            <person name="Rose M."/>
            <person name="Hauf J."/>
            <person name="Berneiser S."/>
            <person name="Hempel S."/>
            <person name="Feldpausch M."/>
            <person name="Lamberth S."/>
            <person name="Villarroel R."/>
            <person name="Gielen J."/>
            <person name="Ardiles W."/>
            <person name="Bents O."/>
            <person name="Lemcke K."/>
            <person name="Kolesov G."/>
            <person name="Mayer K.F.X."/>
            <person name="Rudd S."/>
            <person name="Schoof H."/>
            <person name="Schueller C."/>
            <person name="Zaccaria P."/>
            <person name="Mewes H.-W."/>
            <person name="Bevan M."/>
            <person name="Fransz P.F."/>
        </authorList>
    </citation>
    <scope>NUCLEOTIDE SEQUENCE [LARGE SCALE GENOMIC DNA]</scope>
    <source>
        <strain>cv. Columbia</strain>
    </source>
</reference>
<reference key="2">
    <citation type="journal article" date="2017" name="Plant J.">
        <title>Araport11: a complete reannotation of the Arabidopsis thaliana reference genome.</title>
        <authorList>
            <person name="Cheng C.Y."/>
            <person name="Krishnakumar V."/>
            <person name="Chan A.P."/>
            <person name="Thibaud-Nissen F."/>
            <person name="Schobel S."/>
            <person name="Town C.D."/>
        </authorList>
    </citation>
    <scope>GENOME REANNOTATION</scope>
    <source>
        <strain>cv. Columbia</strain>
    </source>
</reference>
<reference key="3">
    <citation type="journal article" date="2003" name="Science">
        <title>Empirical analysis of transcriptional activity in the Arabidopsis genome.</title>
        <authorList>
            <person name="Yamada K."/>
            <person name="Lim J."/>
            <person name="Dale J.M."/>
            <person name="Chen H."/>
            <person name="Shinn P."/>
            <person name="Palm C.J."/>
            <person name="Southwick A.M."/>
            <person name="Wu H.C."/>
            <person name="Kim C.J."/>
            <person name="Nguyen M."/>
            <person name="Pham P.K."/>
            <person name="Cheuk R.F."/>
            <person name="Karlin-Newmann G."/>
            <person name="Liu S.X."/>
            <person name="Lam B."/>
            <person name="Sakano H."/>
            <person name="Wu T."/>
            <person name="Yu G."/>
            <person name="Miranda M."/>
            <person name="Quach H.L."/>
            <person name="Tripp M."/>
            <person name="Chang C.H."/>
            <person name="Lee J.M."/>
            <person name="Toriumi M.J."/>
            <person name="Chan M.M."/>
            <person name="Tang C.C."/>
            <person name="Onodera C.S."/>
            <person name="Deng J.M."/>
            <person name="Akiyama K."/>
            <person name="Ansari Y."/>
            <person name="Arakawa T."/>
            <person name="Banh J."/>
            <person name="Banno F."/>
            <person name="Bowser L."/>
            <person name="Brooks S.Y."/>
            <person name="Carninci P."/>
            <person name="Chao Q."/>
            <person name="Choy N."/>
            <person name="Enju A."/>
            <person name="Goldsmith A.D."/>
            <person name="Gurjal M."/>
            <person name="Hansen N.F."/>
            <person name="Hayashizaki Y."/>
            <person name="Johnson-Hopson C."/>
            <person name="Hsuan V.W."/>
            <person name="Iida K."/>
            <person name="Karnes M."/>
            <person name="Khan S."/>
            <person name="Koesema E."/>
            <person name="Ishida J."/>
            <person name="Jiang P.X."/>
            <person name="Jones T."/>
            <person name="Kawai J."/>
            <person name="Kamiya A."/>
            <person name="Meyers C."/>
            <person name="Nakajima M."/>
            <person name="Narusaka M."/>
            <person name="Seki M."/>
            <person name="Sakurai T."/>
            <person name="Satou M."/>
            <person name="Tamse R."/>
            <person name="Vaysberg M."/>
            <person name="Wallender E.K."/>
            <person name="Wong C."/>
            <person name="Yamamura Y."/>
            <person name="Yuan S."/>
            <person name="Shinozaki K."/>
            <person name="Davis R.W."/>
            <person name="Theologis A."/>
            <person name="Ecker J.R."/>
        </authorList>
    </citation>
    <scope>NUCLEOTIDE SEQUENCE [LARGE SCALE MRNA]</scope>
    <source>
        <strain>cv. Columbia</strain>
    </source>
</reference>
<reference key="4">
    <citation type="submission" date="2006-07" db="EMBL/GenBank/DDBJ databases">
        <title>Large-scale analysis of RIKEN Arabidopsis full-length (RAFL) cDNAs.</title>
        <authorList>
            <person name="Totoki Y."/>
            <person name="Seki M."/>
            <person name="Ishida J."/>
            <person name="Nakajima M."/>
            <person name="Enju A."/>
            <person name="Kamiya A."/>
            <person name="Narusaka M."/>
            <person name="Shin-i T."/>
            <person name="Nakagawa M."/>
            <person name="Sakamoto N."/>
            <person name="Oishi K."/>
            <person name="Kohara Y."/>
            <person name="Kobayashi M."/>
            <person name="Toyoda A."/>
            <person name="Sakaki Y."/>
            <person name="Sakurai T."/>
            <person name="Iida K."/>
            <person name="Akiyama K."/>
            <person name="Satou M."/>
            <person name="Toyoda T."/>
            <person name="Konagaya A."/>
            <person name="Carninci P."/>
            <person name="Kawai J."/>
            <person name="Hayashizaki Y."/>
            <person name="Shinozaki K."/>
        </authorList>
    </citation>
    <scope>NUCLEOTIDE SEQUENCE [LARGE SCALE MRNA]</scope>
    <source>
        <strain>cv. Columbia</strain>
    </source>
</reference>
<reference key="5">
    <citation type="submission" date="2002-03" db="EMBL/GenBank/DDBJ databases">
        <title>Full-length cDNA from Arabidopsis thaliana.</title>
        <authorList>
            <person name="Brover V.V."/>
            <person name="Troukhan M.E."/>
            <person name="Alexandrov N.A."/>
            <person name="Lu Y.-P."/>
            <person name="Flavell R.B."/>
            <person name="Feldmann K.A."/>
        </authorList>
    </citation>
    <scope>NUCLEOTIDE SEQUENCE [LARGE SCALE MRNA]</scope>
</reference>
<reference key="6">
    <citation type="journal article" date="2012" name="Mol. Cell. Proteomics">
        <title>Comparative large-scale characterisation of plant vs. mammal proteins reveals similar and idiosyncratic N-alpha acetylation features.</title>
        <authorList>
            <person name="Bienvenut W.V."/>
            <person name="Sumpton D."/>
            <person name="Martinez A."/>
            <person name="Lilla S."/>
            <person name="Espagne C."/>
            <person name="Meinnel T."/>
            <person name="Giglione C."/>
        </authorList>
    </citation>
    <scope>ACETYLATION [LARGE SCALE ANALYSIS] AT SER-2</scope>
    <scope>CLEAVAGE OF INITIATOR METHIONINE [LARGE SCALE ANALYSIS]</scope>
    <scope>IDENTIFICATION BY MASS SPECTROMETRY [LARGE SCALE ANALYSIS]</scope>
</reference>
<comment type="function">
    <text evidence="1">Accessory subunit of the mitochondrial membrane respiratory chain NADH dehydrogenase (Complex I), that is believed not to be involved in catalysis. Complex I functions in the transfer of electrons from NADH to the respiratory chain. The immediate electron acceptor for the enzyme is believed to be ubiquinone (By similarity).</text>
</comment>
<comment type="subunit">
    <text>Complex I is composed of at least 49 different subunits.</text>
</comment>
<comment type="subcellular location">
    <subcellularLocation>
        <location evidence="1">Mitochondrion</location>
    </subcellularLocation>
    <subcellularLocation>
        <location evidence="1">Mitochondrion intermembrane space</location>
    </subcellularLocation>
</comment>
<comment type="domain">
    <text evidence="1">Contains four C-X9-C motifs that are predicted to form a helix-coil-helix structure, permitting the formation of intramolecular disulfide bonds.</text>
</comment>
<comment type="similarity">
    <text evidence="3">Belongs to the complex I NDUFA8 subunit family.</text>
</comment>
<organism>
    <name type="scientific">Arabidopsis thaliana</name>
    <name type="common">Mouse-ear cress</name>
    <dbReference type="NCBI Taxonomy" id="3702"/>
    <lineage>
        <taxon>Eukaryota</taxon>
        <taxon>Viridiplantae</taxon>
        <taxon>Streptophyta</taxon>
        <taxon>Embryophyta</taxon>
        <taxon>Tracheophyta</taxon>
        <taxon>Spermatophyta</taxon>
        <taxon>Magnoliopsida</taxon>
        <taxon>eudicotyledons</taxon>
        <taxon>Gunneridae</taxon>
        <taxon>Pentapetalae</taxon>
        <taxon>rosids</taxon>
        <taxon>malvids</taxon>
        <taxon>Brassicales</taxon>
        <taxon>Brassicaceae</taxon>
        <taxon>Camelineae</taxon>
        <taxon>Arabidopsis</taxon>
    </lineage>
</organism>
<gene>
    <name type="ordered locus">At5g18800</name>
    <name type="ORF">F17K4.50</name>
</gene>
<feature type="initiator methionine" description="Removed" evidence="4">
    <location>
        <position position="1"/>
    </location>
</feature>
<feature type="chain" id="PRO_0000410933" description="NADH dehydrogenase [ubiquinone] 1 alpha subcomplex subunit 8-B">
    <location>
        <begin position="2"/>
        <end position="106"/>
    </location>
</feature>
<feature type="domain" description="CHCH 1" evidence="2">
    <location>
        <begin position="26"/>
        <end position="67"/>
    </location>
</feature>
<feature type="domain" description="CHCH 2" evidence="2">
    <location>
        <begin position="68"/>
        <end position="106"/>
    </location>
</feature>
<feature type="short sequence motif" description="Cx9C motif 1" evidence="2">
    <location>
        <begin position="29"/>
        <end position="39"/>
    </location>
</feature>
<feature type="short sequence motif" description="Cx9C motif 2" evidence="2">
    <location>
        <begin position="49"/>
        <end position="59"/>
    </location>
</feature>
<feature type="short sequence motif" description="Cx9C motif 3" evidence="2">
    <location>
        <begin position="71"/>
        <end position="81"/>
    </location>
</feature>
<feature type="short sequence motif" description="Cx10C motif" evidence="2">
    <location>
        <begin position="92"/>
        <end position="103"/>
    </location>
</feature>
<feature type="modified residue" description="N-acetylserine" evidence="4">
    <location>
        <position position="2"/>
    </location>
</feature>
<feature type="disulfide bond" evidence="2">
    <location>
        <begin position="29"/>
        <end position="59"/>
    </location>
</feature>
<feature type="disulfide bond" evidence="2">
    <location>
        <begin position="39"/>
        <end position="49"/>
    </location>
</feature>
<feature type="disulfide bond" evidence="2">
    <location>
        <begin position="71"/>
        <end position="103"/>
    </location>
</feature>
<feature type="disulfide bond" evidence="2">
    <location>
        <begin position="81"/>
        <end position="92"/>
    </location>
</feature>
<feature type="helix" evidence="5">
    <location>
        <begin position="15"/>
        <end position="20"/>
    </location>
</feature>
<feature type="helix" evidence="5">
    <location>
        <begin position="22"/>
        <end position="28"/>
    </location>
</feature>
<feature type="helix" evidence="5">
    <location>
        <begin position="30"/>
        <end position="42"/>
    </location>
</feature>
<feature type="helix" evidence="5">
    <location>
        <begin position="46"/>
        <end position="49"/>
    </location>
</feature>
<feature type="helix" evidence="5">
    <location>
        <begin position="50"/>
        <end position="70"/>
    </location>
</feature>
<feature type="helix" evidence="5">
    <location>
        <begin position="72"/>
        <end position="84"/>
    </location>
</feature>
<feature type="helix" evidence="5">
    <location>
        <begin position="89"/>
        <end position="92"/>
    </location>
</feature>
<feature type="helix" evidence="5">
    <location>
        <begin position="93"/>
        <end position="102"/>
    </location>
</feature>
<evidence type="ECO:0000250" key="1"/>
<evidence type="ECO:0000255" key="2">
    <source>
        <dbReference type="PROSITE-ProRule" id="PRU01150"/>
    </source>
</evidence>
<evidence type="ECO:0000305" key="3"/>
<evidence type="ECO:0007744" key="4">
    <source>
    </source>
</evidence>
<evidence type="ECO:0007829" key="5">
    <source>
        <dbReference type="PDB" id="8BEF"/>
    </source>
</evidence>
<proteinExistence type="evidence at protein level"/>